<organism>
    <name type="scientific">Borreliella burgdorferi (strain ATCC 35210 / DSM 4680 / CIP 102532 / B31)</name>
    <name type="common">Borrelia burgdorferi</name>
    <dbReference type="NCBI Taxonomy" id="224326"/>
    <lineage>
        <taxon>Bacteria</taxon>
        <taxon>Pseudomonadati</taxon>
        <taxon>Spirochaetota</taxon>
        <taxon>Spirochaetia</taxon>
        <taxon>Spirochaetales</taxon>
        <taxon>Borreliaceae</taxon>
        <taxon>Borreliella</taxon>
    </lineage>
</organism>
<feature type="chain" id="PRO_0000329540" description="Polyribonucleotide nucleotidyltransferase">
    <location>
        <begin position="1"/>
        <end position="716"/>
    </location>
</feature>
<feature type="domain" description="KH" evidence="1">
    <location>
        <begin position="547"/>
        <end position="606"/>
    </location>
</feature>
<feature type="domain" description="S1 motif" evidence="1">
    <location>
        <begin position="616"/>
        <end position="711"/>
    </location>
</feature>
<feature type="binding site" evidence="1">
    <location>
        <position position="480"/>
    </location>
    <ligand>
        <name>Mg(2+)</name>
        <dbReference type="ChEBI" id="CHEBI:18420"/>
    </ligand>
</feature>
<feature type="binding site" evidence="1">
    <location>
        <position position="486"/>
    </location>
    <ligand>
        <name>Mg(2+)</name>
        <dbReference type="ChEBI" id="CHEBI:18420"/>
    </ligand>
</feature>
<accession>O51745</accession>
<dbReference type="EC" id="2.7.7.8" evidence="1"/>
<dbReference type="EMBL" id="AE000783">
    <property type="protein sequence ID" value="AAC67149.2"/>
    <property type="molecule type" value="Genomic_DNA"/>
</dbReference>
<dbReference type="PIR" id="D70200">
    <property type="entry name" value="D70200"/>
</dbReference>
<dbReference type="RefSeq" id="NP_212939.2">
    <property type="nucleotide sequence ID" value="NC_001318.1"/>
</dbReference>
<dbReference type="SMR" id="O51745"/>
<dbReference type="STRING" id="224326.BB_0805"/>
<dbReference type="PaxDb" id="224326-BB_0805"/>
<dbReference type="EnsemblBacteria" id="AAC67149">
    <property type="protein sequence ID" value="AAC67149"/>
    <property type="gene ID" value="BB_0805"/>
</dbReference>
<dbReference type="KEGG" id="bbu:BB_0805"/>
<dbReference type="PATRIC" id="fig|224326.49.peg.1197"/>
<dbReference type="HOGENOM" id="CLU_004217_2_2_12"/>
<dbReference type="OrthoDB" id="9804305at2"/>
<dbReference type="Proteomes" id="UP000001807">
    <property type="component" value="Chromosome"/>
</dbReference>
<dbReference type="GO" id="GO:0005829">
    <property type="term" value="C:cytosol"/>
    <property type="evidence" value="ECO:0000314"/>
    <property type="project" value="CAFA"/>
</dbReference>
<dbReference type="GO" id="GO:0000175">
    <property type="term" value="F:3'-5'-RNA exonuclease activity"/>
    <property type="evidence" value="ECO:0007669"/>
    <property type="project" value="TreeGrafter"/>
</dbReference>
<dbReference type="GO" id="GO:0000287">
    <property type="term" value="F:magnesium ion binding"/>
    <property type="evidence" value="ECO:0007669"/>
    <property type="project" value="UniProtKB-UniRule"/>
</dbReference>
<dbReference type="GO" id="GO:0004654">
    <property type="term" value="F:polyribonucleotide nucleotidyltransferase activity"/>
    <property type="evidence" value="ECO:0007669"/>
    <property type="project" value="UniProtKB-UniRule"/>
</dbReference>
<dbReference type="GO" id="GO:0003723">
    <property type="term" value="F:RNA binding"/>
    <property type="evidence" value="ECO:0007669"/>
    <property type="project" value="UniProtKB-UniRule"/>
</dbReference>
<dbReference type="GO" id="GO:0006402">
    <property type="term" value="P:mRNA catabolic process"/>
    <property type="evidence" value="ECO:0007669"/>
    <property type="project" value="UniProtKB-UniRule"/>
</dbReference>
<dbReference type="GO" id="GO:0006396">
    <property type="term" value="P:RNA processing"/>
    <property type="evidence" value="ECO:0007669"/>
    <property type="project" value="InterPro"/>
</dbReference>
<dbReference type="CDD" id="cd02393">
    <property type="entry name" value="KH-I_PNPase"/>
    <property type="match status" value="1"/>
</dbReference>
<dbReference type="CDD" id="cd11363">
    <property type="entry name" value="RNase_PH_PNPase_1"/>
    <property type="match status" value="1"/>
</dbReference>
<dbReference type="CDD" id="cd11364">
    <property type="entry name" value="RNase_PH_PNPase_2"/>
    <property type="match status" value="1"/>
</dbReference>
<dbReference type="FunFam" id="3.30.1370.10:FF:000001">
    <property type="entry name" value="Polyribonucleotide nucleotidyltransferase"/>
    <property type="match status" value="1"/>
</dbReference>
<dbReference type="FunFam" id="3.30.230.70:FF:000001">
    <property type="entry name" value="Polyribonucleotide nucleotidyltransferase"/>
    <property type="match status" value="1"/>
</dbReference>
<dbReference type="FunFam" id="3.30.230.70:FF:000002">
    <property type="entry name" value="Polyribonucleotide nucleotidyltransferase"/>
    <property type="match status" value="1"/>
</dbReference>
<dbReference type="Gene3D" id="3.30.230.70">
    <property type="entry name" value="GHMP Kinase, N-terminal domain"/>
    <property type="match status" value="2"/>
</dbReference>
<dbReference type="Gene3D" id="3.30.1370.10">
    <property type="entry name" value="K Homology domain, type 1"/>
    <property type="match status" value="1"/>
</dbReference>
<dbReference type="Gene3D" id="2.40.50.140">
    <property type="entry name" value="Nucleic acid-binding proteins"/>
    <property type="match status" value="1"/>
</dbReference>
<dbReference type="HAMAP" id="MF_01595">
    <property type="entry name" value="PNPase"/>
    <property type="match status" value="1"/>
</dbReference>
<dbReference type="InterPro" id="IPR001247">
    <property type="entry name" value="ExoRNase_PH_dom1"/>
</dbReference>
<dbReference type="InterPro" id="IPR015847">
    <property type="entry name" value="ExoRNase_PH_dom2"/>
</dbReference>
<dbReference type="InterPro" id="IPR036345">
    <property type="entry name" value="ExoRNase_PH_dom2_sf"/>
</dbReference>
<dbReference type="InterPro" id="IPR004087">
    <property type="entry name" value="KH_dom"/>
</dbReference>
<dbReference type="InterPro" id="IPR004088">
    <property type="entry name" value="KH_dom_type_1"/>
</dbReference>
<dbReference type="InterPro" id="IPR036612">
    <property type="entry name" value="KH_dom_type_1_sf"/>
</dbReference>
<dbReference type="InterPro" id="IPR012340">
    <property type="entry name" value="NA-bd_OB-fold"/>
</dbReference>
<dbReference type="InterPro" id="IPR012162">
    <property type="entry name" value="PNPase"/>
</dbReference>
<dbReference type="InterPro" id="IPR027408">
    <property type="entry name" value="PNPase/RNase_PH_dom_sf"/>
</dbReference>
<dbReference type="InterPro" id="IPR015848">
    <property type="entry name" value="PNPase_PH_RNA-bd_bac/org-type"/>
</dbReference>
<dbReference type="InterPro" id="IPR020568">
    <property type="entry name" value="Ribosomal_Su5_D2-typ_SF"/>
</dbReference>
<dbReference type="InterPro" id="IPR003029">
    <property type="entry name" value="S1_domain"/>
</dbReference>
<dbReference type="NCBIfam" id="TIGR03591">
    <property type="entry name" value="polynuc_phos"/>
    <property type="match status" value="1"/>
</dbReference>
<dbReference type="NCBIfam" id="NF008805">
    <property type="entry name" value="PRK11824.1"/>
    <property type="match status" value="1"/>
</dbReference>
<dbReference type="PANTHER" id="PTHR11252">
    <property type="entry name" value="POLYRIBONUCLEOTIDE NUCLEOTIDYLTRANSFERASE"/>
    <property type="match status" value="1"/>
</dbReference>
<dbReference type="PANTHER" id="PTHR11252:SF0">
    <property type="entry name" value="POLYRIBONUCLEOTIDE NUCLEOTIDYLTRANSFERASE 1, MITOCHONDRIAL"/>
    <property type="match status" value="1"/>
</dbReference>
<dbReference type="Pfam" id="PF00013">
    <property type="entry name" value="KH_1"/>
    <property type="match status" value="1"/>
</dbReference>
<dbReference type="Pfam" id="PF03726">
    <property type="entry name" value="PNPase"/>
    <property type="match status" value="1"/>
</dbReference>
<dbReference type="Pfam" id="PF01138">
    <property type="entry name" value="RNase_PH"/>
    <property type="match status" value="2"/>
</dbReference>
<dbReference type="Pfam" id="PF03725">
    <property type="entry name" value="RNase_PH_C"/>
    <property type="match status" value="2"/>
</dbReference>
<dbReference type="Pfam" id="PF00575">
    <property type="entry name" value="S1"/>
    <property type="match status" value="1"/>
</dbReference>
<dbReference type="PIRSF" id="PIRSF005499">
    <property type="entry name" value="PNPase"/>
    <property type="match status" value="1"/>
</dbReference>
<dbReference type="SMART" id="SM00322">
    <property type="entry name" value="KH"/>
    <property type="match status" value="1"/>
</dbReference>
<dbReference type="SMART" id="SM00316">
    <property type="entry name" value="S1"/>
    <property type="match status" value="1"/>
</dbReference>
<dbReference type="SUPFAM" id="SSF54791">
    <property type="entry name" value="Eukaryotic type KH-domain (KH-domain type I)"/>
    <property type="match status" value="1"/>
</dbReference>
<dbReference type="SUPFAM" id="SSF50249">
    <property type="entry name" value="Nucleic acid-binding proteins"/>
    <property type="match status" value="1"/>
</dbReference>
<dbReference type="SUPFAM" id="SSF55666">
    <property type="entry name" value="Ribonuclease PH domain 2-like"/>
    <property type="match status" value="2"/>
</dbReference>
<dbReference type="SUPFAM" id="SSF54211">
    <property type="entry name" value="Ribosomal protein S5 domain 2-like"/>
    <property type="match status" value="2"/>
</dbReference>
<dbReference type="PROSITE" id="PS50084">
    <property type="entry name" value="KH_TYPE_1"/>
    <property type="match status" value="1"/>
</dbReference>
<dbReference type="PROSITE" id="PS50126">
    <property type="entry name" value="S1"/>
    <property type="match status" value="1"/>
</dbReference>
<sequence length="716" mass="79311">MKIGRDELVFETGFMAKQANGSVLATYGGSSVLATVCCSSNVREDLDFVPLSVEYNEKYYAAGKIPGGFIKREGKPKDKEILVSRLIDRPMRPLFDKRFGREIQVIPTTLATDQLNPPDIVGMNAAFTAVFLSDIPFNGPIAAVRMVYLNGKFIVNPSFEEIHDSDLDIVVAGSLNGITMVEGGANEVGEDILLSAIDGAHEYIKQICNAQKEFLDIVGKKEKLPLAFEEKIFEFKDELRDFVYADLKEACFVKGKLNRDKAITLLRNKSYEYFSSLEKLTDSNESLFHKAFDDFEKEIVRSSILNDNIRTDGRTPNEIRDIISEVDILSRTHGSALFTRGETQALAVTTLGTSIDEQIMDDIDGDKRLNFMLHYNFPPFSVGETGRLMTGRREIGHGHLAQRALESMVPGKNDFPYTIRVVSEVLESNGSSSMATVCAGSMSLMSAGVPVKGQVAGIAMGLISEGDKYVVLSDILGEEDHLGDMDFKVAGTKNGITGFQMDIKIENVTKDLMRDALEQARIGRIHILSIMNTVISNSRVGISKYAPKIVQLQIDIDKISLVIGSTGKTVKAITDEFEVKVQIEQNGKIILFGDDDFKMQKAKERIESIVREPKVGEIYEGTVKKINSFGAFIELTPAKEGFLSTRLKPRDSKYGSGRFGNSNRYSRFGGGGENIRGNAGLVRPPKLEEGQRIKVKIIDIDKFGKIDLEIVRDKDY</sequence>
<comment type="function">
    <text evidence="1">Involved in mRNA degradation. Catalyzes the phosphorolysis of single-stranded polyribonucleotides processively in the 3'- to 5'-direction.</text>
</comment>
<comment type="catalytic activity">
    <reaction evidence="1">
        <text>RNA(n+1) + phosphate = RNA(n) + a ribonucleoside 5'-diphosphate</text>
        <dbReference type="Rhea" id="RHEA:22096"/>
        <dbReference type="Rhea" id="RHEA-COMP:14527"/>
        <dbReference type="Rhea" id="RHEA-COMP:17342"/>
        <dbReference type="ChEBI" id="CHEBI:43474"/>
        <dbReference type="ChEBI" id="CHEBI:57930"/>
        <dbReference type="ChEBI" id="CHEBI:140395"/>
        <dbReference type="EC" id="2.7.7.8"/>
    </reaction>
</comment>
<comment type="cofactor">
    <cofactor evidence="1">
        <name>Mg(2+)</name>
        <dbReference type="ChEBI" id="CHEBI:18420"/>
    </cofactor>
</comment>
<comment type="subcellular location">
    <subcellularLocation>
        <location evidence="1">Cytoplasm</location>
    </subcellularLocation>
</comment>
<comment type="similarity">
    <text evidence="1">Belongs to the polyribonucleotide nucleotidyltransferase family.</text>
</comment>
<proteinExistence type="inferred from homology"/>
<evidence type="ECO:0000255" key="1">
    <source>
        <dbReference type="HAMAP-Rule" id="MF_01595"/>
    </source>
</evidence>
<protein>
    <recommendedName>
        <fullName evidence="1">Polyribonucleotide nucleotidyltransferase</fullName>
        <ecNumber evidence="1">2.7.7.8</ecNumber>
    </recommendedName>
    <alternativeName>
        <fullName evidence="1">Polynucleotide phosphorylase</fullName>
        <shortName evidence="1">PNPase</shortName>
    </alternativeName>
</protein>
<name>PNP_BORBU</name>
<keyword id="KW-0963">Cytoplasm</keyword>
<keyword id="KW-0460">Magnesium</keyword>
<keyword id="KW-0479">Metal-binding</keyword>
<keyword id="KW-0548">Nucleotidyltransferase</keyword>
<keyword id="KW-1185">Reference proteome</keyword>
<keyword id="KW-0694">RNA-binding</keyword>
<keyword id="KW-0808">Transferase</keyword>
<reference key="1">
    <citation type="journal article" date="1997" name="Nature">
        <title>Genomic sequence of a Lyme disease spirochaete, Borrelia burgdorferi.</title>
        <authorList>
            <person name="Fraser C.M."/>
            <person name="Casjens S."/>
            <person name="Huang W.M."/>
            <person name="Sutton G.G."/>
            <person name="Clayton R.A."/>
            <person name="Lathigra R."/>
            <person name="White O."/>
            <person name="Ketchum K.A."/>
            <person name="Dodson R.J."/>
            <person name="Hickey E.K."/>
            <person name="Gwinn M.L."/>
            <person name="Dougherty B.A."/>
            <person name="Tomb J.-F."/>
            <person name="Fleischmann R.D."/>
            <person name="Richardson D.L."/>
            <person name="Peterson J.D."/>
            <person name="Kerlavage A.R."/>
            <person name="Quackenbush J."/>
            <person name="Salzberg S.L."/>
            <person name="Hanson M."/>
            <person name="van Vugt R."/>
            <person name="Palmer N."/>
            <person name="Adams M.D."/>
            <person name="Gocayne J.D."/>
            <person name="Weidman J.F."/>
            <person name="Utterback T.R."/>
            <person name="Watthey L."/>
            <person name="McDonald L.A."/>
            <person name="Artiach P."/>
            <person name="Bowman C."/>
            <person name="Garland S.A."/>
            <person name="Fujii C."/>
            <person name="Cotton M.D."/>
            <person name="Horst K."/>
            <person name="Roberts K.M."/>
            <person name="Hatch B."/>
            <person name="Smith H.O."/>
            <person name="Venter J.C."/>
        </authorList>
    </citation>
    <scope>NUCLEOTIDE SEQUENCE [LARGE SCALE GENOMIC DNA]</scope>
    <source>
        <strain>ATCC 35210 / DSM 4680 / CIP 102532 / B31</strain>
    </source>
</reference>
<gene>
    <name evidence="1" type="primary">pnp</name>
    <name type="ordered locus">BB_0805</name>
</gene>